<gene>
    <name type="primary">NIPSNAP3B</name>
    <name type="synonym">NIPSNAP3</name>
</gene>
<accession>Q9BS92</accession>
<accession>Q5VX30</accession>
<accession>Q9NUM2</accession>
<feature type="chain" id="PRO_0000221154" description="Protein NipSnap homolog 3B">
    <location>
        <begin position="1"/>
        <end position="247"/>
    </location>
</feature>
<feature type="modified residue" description="N6-succinyllysine" evidence="1">
    <location>
        <position position="45"/>
    </location>
</feature>
<feature type="modified residue" description="N6-succinyllysine" evidence="1">
    <location>
        <position position="57"/>
    </location>
</feature>
<feature type="sequence variant" id="VAR_050277" description="In dbSNP:rs10761084." evidence="2">
    <original>A</original>
    <variation>P</variation>
    <location>
        <position position="94"/>
    </location>
</feature>
<feature type="sequence variant" id="VAR_050278" description="In dbSNP:rs3739740.">
    <original>K</original>
    <variation>E</variation>
    <location>
        <position position="154"/>
    </location>
</feature>
<feature type="sequence variant" id="VAR_050279" description="In dbSNP:rs3739741." evidence="2">
    <original>A</original>
    <variation>G</variation>
    <location>
        <position position="159"/>
    </location>
</feature>
<feature type="sequence conflict" description="In Ref. 2; BAA92101." evidence="3" ref="2">
    <original>E</original>
    <variation>G</variation>
    <location>
        <position position="190"/>
    </location>
</feature>
<comment type="similarity">
    <text evidence="3">Belongs to the NipSnap family.</text>
</comment>
<reference key="1">
    <citation type="journal article" date="2001" name="Genomics">
        <title>Human and mouse ABCA1 comparative sequencing and transgenesis studies revealing novel regulatory sequences.</title>
        <authorList>
            <person name="Qiu Y."/>
            <person name="Cavelier L."/>
            <person name="Chiu S."/>
            <person name="Yang X."/>
            <person name="Rubin E."/>
            <person name="Cheng J.-F."/>
        </authorList>
    </citation>
    <scope>NUCLEOTIDE SEQUENCE [GENOMIC DNA]</scope>
</reference>
<reference key="2">
    <citation type="journal article" date="2004" name="Nat. Genet.">
        <title>Complete sequencing and characterization of 21,243 full-length human cDNAs.</title>
        <authorList>
            <person name="Ota T."/>
            <person name="Suzuki Y."/>
            <person name="Nishikawa T."/>
            <person name="Otsuki T."/>
            <person name="Sugiyama T."/>
            <person name="Irie R."/>
            <person name="Wakamatsu A."/>
            <person name="Hayashi K."/>
            <person name="Sato H."/>
            <person name="Nagai K."/>
            <person name="Kimura K."/>
            <person name="Makita H."/>
            <person name="Sekine M."/>
            <person name="Obayashi M."/>
            <person name="Nishi T."/>
            <person name="Shibahara T."/>
            <person name="Tanaka T."/>
            <person name="Ishii S."/>
            <person name="Yamamoto J."/>
            <person name="Saito K."/>
            <person name="Kawai Y."/>
            <person name="Isono Y."/>
            <person name="Nakamura Y."/>
            <person name="Nagahari K."/>
            <person name="Murakami K."/>
            <person name="Yasuda T."/>
            <person name="Iwayanagi T."/>
            <person name="Wagatsuma M."/>
            <person name="Shiratori A."/>
            <person name="Sudo H."/>
            <person name="Hosoiri T."/>
            <person name="Kaku Y."/>
            <person name="Kodaira H."/>
            <person name="Kondo H."/>
            <person name="Sugawara M."/>
            <person name="Takahashi M."/>
            <person name="Kanda K."/>
            <person name="Yokoi T."/>
            <person name="Furuya T."/>
            <person name="Kikkawa E."/>
            <person name="Omura Y."/>
            <person name="Abe K."/>
            <person name="Kamihara K."/>
            <person name="Katsuta N."/>
            <person name="Sato K."/>
            <person name="Tanikawa M."/>
            <person name="Yamazaki M."/>
            <person name="Ninomiya K."/>
            <person name="Ishibashi T."/>
            <person name="Yamashita H."/>
            <person name="Murakawa K."/>
            <person name="Fujimori K."/>
            <person name="Tanai H."/>
            <person name="Kimata M."/>
            <person name="Watanabe M."/>
            <person name="Hiraoka S."/>
            <person name="Chiba Y."/>
            <person name="Ishida S."/>
            <person name="Ono Y."/>
            <person name="Takiguchi S."/>
            <person name="Watanabe S."/>
            <person name="Yosida M."/>
            <person name="Hotuta T."/>
            <person name="Kusano J."/>
            <person name="Kanehori K."/>
            <person name="Takahashi-Fujii A."/>
            <person name="Hara H."/>
            <person name="Tanase T.-O."/>
            <person name="Nomura Y."/>
            <person name="Togiya S."/>
            <person name="Komai F."/>
            <person name="Hara R."/>
            <person name="Takeuchi K."/>
            <person name="Arita M."/>
            <person name="Imose N."/>
            <person name="Musashino K."/>
            <person name="Yuuki H."/>
            <person name="Oshima A."/>
            <person name="Sasaki N."/>
            <person name="Aotsuka S."/>
            <person name="Yoshikawa Y."/>
            <person name="Matsunawa H."/>
            <person name="Ichihara T."/>
            <person name="Shiohata N."/>
            <person name="Sano S."/>
            <person name="Moriya S."/>
            <person name="Momiyama H."/>
            <person name="Satoh N."/>
            <person name="Takami S."/>
            <person name="Terashima Y."/>
            <person name="Suzuki O."/>
            <person name="Nakagawa S."/>
            <person name="Senoh A."/>
            <person name="Mizoguchi H."/>
            <person name="Goto Y."/>
            <person name="Shimizu F."/>
            <person name="Wakebe H."/>
            <person name="Hishigaki H."/>
            <person name="Watanabe T."/>
            <person name="Sugiyama A."/>
            <person name="Takemoto M."/>
            <person name="Kawakami B."/>
            <person name="Yamazaki M."/>
            <person name="Watanabe K."/>
            <person name="Kumagai A."/>
            <person name="Itakura S."/>
            <person name="Fukuzumi Y."/>
            <person name="Fujimori Y."/>
            <person name="Komiyama M."/>
            <person name="Tashiro H."/>
            <person name="Tanigami A."/>
            <person name="Fujiwara T."/>
            <person name="Ono T."/>
            <person name="Yamada K."/>
            <person name="Fujii Y."/>
            <person name="Ozaki K."/>
            <person name="Hirao M."/>
            <person name="Ohmori Y."/>
            <person name="Kawabata A."/>
            <person name="Hikiji T."/>
            <person name="Kobatake N."/>
            <person name="Inagaki H."/>
            <person name="Ikema Y."/>
            <person name="Okamoto S."/>
            <person name="Okitani R."/>
            <person name="Kawakami T."/>
            <person name="Noguchi S."/>
            <person name="Itoh T."/>
            <person name="Shigeta K."/>
            <person name="Senba T."/>
            <person name="Matsumura K."/>
            <person name="Nakajima Y."/>
            <person name="Mizuno T."/>
            <person name="Morinaga M."/>
            <person name="Sasaki M."/>
            <person name="Togashi T."/>
            <person name="Oyama M."/>
            <person name="Hata H."/>
            <person name="Watanabe M."/>
            <person name="Komatsu T."/>
            <person name="Mizushima-Sugano J."/>
            <person name="Satoh T."/>
            <person name="Shirai Y."/>
            <person name="Takahashi Y."/>
            <person name="Nakagawa K."/>
            <person name="Okumura K."/>
            <person name="Nagase T."/>
            <person name="Nomura N."/>
            <person name="Kikuchi H."/>
            <person name="Masuho Y."/>
            <person name="Yamashita R."/>
            <person name="Nakai K."/>
            <person name="Yada T."/>
            <person name="Nakamura Y."/>
            <person name="Ohara O."/>
            <person name="Isogai T."/>
            <person name="Sugano S."/>
        </authorList>
    </citation>
    <scope>NUCLEOTIDE SEQUENCE [LARGE SCALE MRNA]</scope>
    <scope>VARIANTS PRO-94 AND GLY-159</scope>
    <source>
        <tissue>Placenta</tissue>
    </source>
</reference>
<reference key="3">
    <citation type="journal article" date="2004" name="Nature">
        <title>DNA sequence and analysis of human chromosome 9.</title>
        <authorList>
            <person name="Humphray S.J."/>
            <person name="Oliver K."/>
            <person name="Hunt A.R."/>
            <person name="Plumb R.W."/>
            <person name="Loveland J.E."/>
            <person name="Howe K.L."/>
            <person name="Andrews T.D."/>
            <person name="Searle S."/>
            <person name="Hunt S.E."/>
            <person name="Scott C.E."/>
            <person name="Jones M.C."/>
            <person name="Ainscough R."/>
            <person name="Almeida J.P."/>
            <person name="Ambrose K.D."/>
            <person name="Ashwell R.I.S."/>
            <person name="Babbage A.K."/>
            <person name="Babbage S."/>
            <person name="Bagguley C.L."/>
            <person name="Bailey J."/>
            <person name="Banerjee R."/>
            <person name="Barker D.J."/>
            <person name="Barlow K.F."/>
            <person name="Bates K."/>
            <person name="Beasley H."/>
            <person name="Beasley O."/>
            <person name="Bird C.P."/>
            <person name="Bray-Allen S."/>
            <person name="Brown A.J."/>
            <person name="Brown J.Y."/>
            <person name="Burford D."/>
            <person name="Burrill W."/>
            <person name="Burton J."/>
            <person name="Carder C."/>
            <person name="Carter N.P."/>
            <person name="Chapman J.C."/>
            <person name="Chen Y."/>
            <person name="Clarke G."/>
            <person name="Clark S.Y."/>
            <person name="Clee C.M."/>
            <person name="Clegg S."/>
            <person name="Collier R.E."/>
            <person name="Corby N."/>
            <person name="Crosier M."/>
            <person name="Cummings A.T."/>
            <person name="Davies J."/>
            <person name="Dhami P."/>
            <person name="Dunn M."/>
            <person name="Dutta I."/>
            <person name="Dyer L.W."/>
            <person name="Earthrowl M.E."/>
            <person name="Faulkner L."/>
            <person name="Fleming C.J."/>
            <person name="Frankish A."/>
            <person name="Frankland J.A."/>
            <person name="French L."/>
            <person name="Fricker D.G."/>
            <person name="Garner P."/>
            <person name="Garnett J."/>
            <person name="Ghori J."/>
            <person name="Gilbert J.G.R."/>
            <person name="Glison C."/>
            <person name="Grafham D.V."/>
            <person name="Gribble S."/>
            <person name="Griffiths C."/>
            <person name="Griffiths-Jones S."/>
            <person name="Grocock R."/>
            <person name="Guy J."/>
            <person name="Hall R.E."/>
            <person name="Hammond S."/>
            <person name="Harley J.L."/>
            <person name="Harrison E.S.I."/>
            <person name="Hart E.A."/>
            <person name="Heath P.D."/>
            <person name="Henderson C.D."/>
            <person name="Hopkins B.L."/>
            <person name="Howard P.J."/>
            <person name="Howden P.J."/>
            <person name="Huckle E."/>
            <person name="Johnson C."/>
            <person name="Johnson D."/>
            <person name="Joy A.A."/>
            <person name="Kay M."/>
            <person name="Keenan S."/>
            <person name="Kershaw J.K."/>
            <person name="Kimberley A.M."/>
            <person name="King A."/>
            <person name="Knights A."/>
            <person name="Laird G.K."/>
            <person name="Langford C."/>
            <person name="Lawlor S."/>
            <person name="Leongamornlert D.A."/>
            <person name="Leversha M."/>
            <person name="Lloyd C."/>
            <person name="Lloyd D.M."/>
            <person name="Lovell J."/>
            <person name="Martin S."/>
            <person name="Mashreghi-Mohammadi M."/>
            <person name="Matthews L."/>
            <person name="McLaren S."/>
            <person name="McLay K.E."/>
            <person name="McMurray A."/>
            <person name="Milne S."/>
            <person name="Nickerson T."/>
            <person name="Nisbett J."/>
            <person name="Nordsiek G."/>
            <person name="Pearce A.V."/>
            <person name="Peck A.I."/>
            <person name="Porter K.M."/>
            <person name="Pandian R."/>
            <person name="Pelan S."/>
            <person name="Phillimore B."/>
            <person name="Povey S."/>
            <person name="Ramsey Y."/>
            <person name="Rand V."/>
            <person name="Scharfe M."/>
            <person name="Sehra H.K."/>
            <person name="Shownkeen R."/>
            <person name="Sims S.K."/>
            <person name="Skuce C.D."/>
            <person name="Smith M."/>
            <person name="Steward C.A."/>
            <person name="Swarbreck D."/>
            <person name="Sycamore N."/>
            <person name="Tester J."/>
            <person name="Thorpe A."/>
            <person name="Tracey A."/>
            <person name="Tromans A."/>
            <person name="Thomas D.W."/>
            <person name="Wall M."/>
            <person name="Wallis J.M."/>
            <person name="West A.P."/>
            <person name="Whitehead S.L."/>
            <person name="Willey D.L."/>
            <person name="Williams S.A."/>
            <person name="Wilming L."/>
            <person name="Wray P.W."/>
            <person name="Young L."/>
            <person name="Ashurst J.L."/>
            <person name="Coulson A."/>
            <person name="Blocker H."/>
            <person name="Durbin R.M."/>
            <person name="Sulston J.E."/>
            <person name="Hubbard T."/>
            <person name="Jackson M.J."/>
            <person name="Bentley D.R."/>
            <person name="Beck S."/>
            <person name="Rogers J."/>
            <person name="Dunham I."/>
        </authorList>
    </citation>
    <scope>NUCLEOTIDE SEQUENCE [LARGE SCALE GENOMIC DNA]</scope>
</reference>
<reference key="4">
    <citation type="submission" date="2005-07" db="EMBL/GenBank/DDBJ databases">
        <authorList>
            <person name="Mural R.J."/>
            <person name="Istrail S."/>
            <person name="Sutton G.G."/>
            <person name="Florea L."/>
            <person name="Halpern A.L."/>
            <person name="Mobarry C.M."/>
            <person name="Lippert R."/>
            <person name="Walenz B."/>
            <person name="Shatkay H."/>
            <person name="Dew I."/>
            <person name="Miller J.R."/>
            <person name="Flanigan M.J."/>
            <person name="Edwards N.J."/>
            <person name="Bolanos R."/>
            <person name="Fasulo D."/>
            <person name="Halldorsson B.V."/>
            <person name="Hannenhalli S."/>
            <person name="Turner R."/>
            <person name="Yooseph S."/>
            <person name="Lu F."/>
            <person name="Nusskern D.R."/>
            <person name="Shue B.C."/>
            <person name="Zheng X.H."/>
            <person name="Zhong F."/>
            <person name="Delcher A.L."/>
            <person name="Huson D.H."/>
            <person name="Kravitz S.A."/>
            <person name="Mouchard L."/>
            <person name="Reinert K."/>
            <person name="Remington K.A."/>
            <person name="Clark A.G."/>
            <person name="Waterman M.S."/>
            <person name="Eichler E.E."/>
            <person name="Adams M.D."/>
            <person name="Hunkapiller M.W."/>
            <person name="Myers E.W."/>
            <person name="Venter J.C."/>
        </authorList>
    </citation>
    <scope>NUCLEOTIDE SEQUENCE [LARGE SCALE GENOMIC DNA]</scope>
</reference>
<reference key="5">
    <citation type="journal article" date="2004" name="Genome Res.">
        <title>The status, quality, and expansion of the NIH full-length cDNA project: the Mammalian Gene Collection (MGC).</title>
        <authorList>
            <consortium name="The MGC Project Team"/>
        </authorList>
    </citation>
    <scope>NUCLEOTIDE SEQUENCE [LARGE SCALE MRNA]</scope>
    <source>
        <tissue>Heart</tissue>
        <tissue>Skeletal muscle</tissue>
    </source>
</reference>
<evidence type="ECO:0000250" key="1">
    <source>
        <dbReference type="UniProtKB" id="Q9CQE1"/>
    </source>
</evidence>
<evidence type="ECO:0000269" key="2">
    <source>
    </source>
</evidence>
<evidence type="ECO:0000305" key="3"/>
<dbReference type="EMBL" id="AF287262">
    <property type="protein sequence ID" value="AAK43527.1"/>
    <property type="molecule type" value="Genomic_DNA"/>
</dbReference>
<dbReference type="EMBL" id="AK002137">
    <property type="protein sequence ID" value="BAA92101.1"/>
    <property type="molecule type" value="mRNA"/>
</dbReference>
<dbReference type="EMBL" id="AL359846">
    <property type="status" value="NOT_ANNOTATED_CDS"/>
    <property type="molecule type" value="Genomic_DNA"/>
</dbReference>
<dbReference type="EMBL" id="CH471105">
    <property type="protein sequence ID" value="EAW58991.1"/>
    <property type="molecule type" value="Genomic_DNA"/>
</dbReference>
<dbReference type="EMBL" id="BC005202">
    <property type="protein sequence ID" value="AAH05202.1"/>
    <property type="molecule type" value="mRNA"/>
</dbReference>
<dbReference type="EMBL" id="BC017914">
    <property type="protein sequence ID" value="AAH17914.1"/>
    <property type="molecule type" value="mRNA"/>
</dbReference>
<dbReference type="CCDS" id="CCDS6761.1"/>
<dbReference type="RefSeq" id="NP_060846.2">
    <property type="nucleotide sequence ID" value="NM_018376.3"/>
</dbReference>
<dbReference type="SMR" id="Q9BS92"/>
<dbReference type="BioGRID" id="120616">
    <property type="interactions" value="21"/>
</dbReference>
<dbReference type="FunCoup" id="Q9BS92">
    <property type="interactions" value="459"/>
</dbReference>
<dbReference type="IntAct" id="Q9BS92">
    <property type="interactions" value="19"/>
</dbReference>
<dbReference type="STRING" id="9606.ENSP00000363894"/>
<dbReference type="iPTMnet" id="Q9BS92"/>
<dbReference type="PhosphoSitePlus" id="Q9BS92"/>
<dbReference type="BioMuta" id="NIPSNAP3B"/>
<dbReference type="DMDM" id="17380145"/>
<dbReference type="jPOST" id="Q9BS92"/>
<dbReference type="MassIVE" id="Q9BS92"/>
<dbReference type="PaxDb" id="9606-ENSP00000363894"/>
<dbReference type="PeptideAtlas" id="Q9BS92"/>
<dbReference type="ProteomicsDB" id="78868"/>
<dbReference type="Antibodypedia" id="29254">
    <property type="antibodies" value="130 antibodies from 27 providers"/>
</dbReference>
<dbReference type="DNASU" id="55335"/>
<dbReference type="Ensembl" id="ENST00000374762.4">
    <property type="protein sequence ID" value="ENSP00000363894.3"/>
    <property type="gene ID" value="ENSG00000165028.12"/>
</dbReference>
<dbReference type="GeneID" id="55335"/>
<dbReference type="KEGG" id="hsa:55335"/>
<dbReference type="MANE-Select" id="ENST00000374762.4">
    <property type="protein sequence ID" value="ENSP00000363894.3"/>
    <property type="RefSeq nucleotide sequence ID" value="NM_018376.4"/>
    <property type="RefSeq protein sequence ID" value="NP_060846.2"/>
</dbReference>
<dbReference type="UCSC" id="uc004bci.3">
    <property type="organism name" value="human"/>
</dbReference>
<dbReference type="AGR" id="HGNC:23641"/>
<dbReference type="CTD" id="55335"/>
<dbReference type="DisGeNET" id="55335"/>
<dbReference type="GeneCards" id="NIPSNAP3B"/>
<dbReference type="HGNC" id="HGNC:23641">
    <property type="gene designation" value="NIPSNAP3B"/>
</dbReference>
<dbReference type="HPA" id="ENSG00000165028">
    <property type="expression patterns" value="Tissue enhanced (skeletal muscle, tongue)"/>
</dbReference>
<dbReference type="MalaCards" id="NIPSNAP3B"/>
<dbReference type="MIM" id="608872">
    <property type="type" value="gene"/>
</dbReference>
<dbReference type="neXtProt" id="NX_Q9BS92"/>
<dbReference type="OpenTargets" id="ENSG00000165028"/>
<dbReference type="PharmGKB" id="PA134947095"/>
<dbReference type="VEuPathDB" id="HostDB:ENSG00000165028"/>
<dbReference type="eggNOG" id="KOG2883">
    <property type="taxonomic scope" value="Eukaryota"/>
</dbReference>
<dbReference type="GeneTree" id="ENSGT00950000183018"/>
<dbReference type="HOGENOM" id="CLU_085919_0_1_1"/>
<dbReference type="InParanoid" id="Q9BS92"/>
<dbReference type="OMA" id="WYESADH"/>
<dbReference type="OrthoDB" id="10262843at2759"/>
<dbReference type="PAN-GO" id="Q9BS92">
    <property type="GO annotations" value="1 GO annotation based on evolutionary models"/>
</dbReference>
<dbReference type="PhylomeDB" id="Q9BS92"/>
<dbReference type="TreeFam" id="TF314501"/>
<dbReference type="PathwayCommons" id="Q9BS92"/>
<dbReference type="BioGRID-ORCS" id="55335">
    <property type="hits" value="9 hits in 1157 CRISPR screens"/>
</dbReference>
<dbReference type="ChiTaRS" id="NIPSNAP3B">
    <property type="organism name" value="human"/>
</dbReference>
<dbReference type="GenomeRNAi" id="55335"/>
<dbReference type="Pharos" id="Q9BS92">
    <property type="development level" value="Tbio"/>
</dbReference>
<dbReference type="PRO" id="PR:Q9BS92"/>
<dbReference type="Proteomes" id="UP000005640">
    <property type="component" value="Chromosome 9"/>
</dbReference>
<dbReference type="RNAct" id="Q9BS92">
    <property type="molecule type" value="protein"/>
</dbReference>
<dbReference type="Bgee" id="ENSG00000165028">
    <property type="expression patterns" value="Expressed in biceps brachii and 135 other cell types or tissues"/>
</dbReference>
<dbReference type="ExpressionAtlas" id="Q9BS92">
    <property type="expression patterns" value="baseline and differential"/>
</dbReference>
<dbReference type="GO" id="GO:0005739">
    <property type="term" value="C:mitochondrion"/>
    <property type="evidence" value="ECO:0006056"/>
    <property type="project" value="FlyBase"/>
</dbReference>
<dbReference type="GO" id="GO:0000423">
    <property type="term" value="P:mitophagy"/>
    <property type="evidence" value="ECO:0007669"/>
    <property type="project" value="UniProtKB-ARBA"/>
</dbReference>
<dbReference type="FunFam" id="3.30.70.100:FF:000017">
    <property type="entry name" value="Protein NipSnap homolog 3A"/>
    <property type="match status" value="1"/>
</dbReference>
<dbReference type="FunFam" id="3.30.70.100:FF:000019">
    <property type="entry name" value="Protein NipSnap homolog 3A"/>
    <property type="match status" value="1"/>
</dbReference>
<dbReference type="Gene3D" id="3.30.70.100">
    <property type="match status" value="2"/>
</dbReference>
<dbReference type="InterPro" id="IPR011008">
    <property type="entry name" value="Dimeric_a/b-barrel"/>
</dbReference>
<dbReference type="InterPro" id="IPR012577">
    <property type="entry name" value="NIPSNAP"/>
</dbReference>
<dbReference type="InterPro" id="IPR051557">
    <property type="entry name" value="NipSnap_domain"/>
</dbReference>
<dbReference type="PANTHER" id="PTHR21017">
    <property type="entry name" value="NIPSNAP-RELATED"/>
    <property type="match status" value="1"/>
</dbReference>
<dbReference type="PANTHER" id="PTHR21017:SF18">
    <property type="entry name" value="PROTEIN NIPSNAP HOMOLOG 3B"/>
    <property type="match status" value="1"/>
</dbReference>
<dbReference type="Pfam" id="PF07978">
    <property type="entry name" value="NIPSNAP"/>
    <property type="match status" value="2"/>
</dbReference>
<dbReference type="SUPFAM" id="SSF54909">
    <property type="entry name" value="Dimeric alpha+beta barrel"/>
    <property type="match status" value="2"/>
</dbReference>
<organism>
    <name type="scientific">Homo sapiens</name>
    <name type="common">Human</name>
    <dbReference type="NCBI Taxonomy" id="9606"/>
    <lineage>
        <taxon>Eukaryota</taxon>
        <taxon>Metazoa</taxon>
        <taxon>Chordata</taxon>
        <taxon>Craniata</taxon>
        <taxon>Vertebrata</taxon>
        <taxon>Euteleostomi</taxon>
        <taxon>Mammalia</taxon>
        <taxon>Eutheria</taxon>
        <taxon>Euarchontoglires</taxon>
        <taxon>Primates</taxon>
        <taxon>Haplorrhini</taxon>
        <taxon>Catarrhini</taxon>
        <taxon>Hominidae</taxon>
        <taxon>Homo</taxon>
    </lineage>
</organism>
<sequence length="247" mass="28313">MLVLRSGLTKALASRTLAPQVCSSFATGPRQYDGTFYEFRTYYLKPSNMNAFMENLKKNIHLRTSYSELVGFWSVEFGGRTNKVFHIWKYDNFAHRAEVRKALANCKEWQEQSIIPNLARIDKQETEITYLIPWSKLEKPPKEGVYELAVFQMKPGGPALWGDAFERAINAHVNLGYTKVVGVFHTEYGELNRVHVLWWNESADSRAAGRHKSHEDPRVVAAVRESVNYLVSQQNMLLIPASFSPLK</sequence>
<protein>
    <recommendedName>
        <fullName>Protein NipSnap homolog 3B</fullName>
        <shortName>NipSnap3B</shortName>
    </recommendedName>
    <alternativeName>
        <fullName>SNAP1</fullName>
    </alternativeName>
</protein>
<proteinExistence type="evidence at protein level"/>
<name>NPS3B_HUMAN</name>
<keyword id="KW-1267">Proteomics identification</keyword>
<keyword id="KW-1185">Reference proteome</keyword>